<reference key="1">
    <citation type="journal article" date="2003" name="PLoS Biol.">
        <title>The genome sequence of Caenorhabditis briggsae: a platform for comparative genomics.</title>
        <authorList>
            <person name="Stein L.D."/>
            <person name="Bao Z."/>
            <person name="Blasiar D."/>
            <person name="Blumenthal T."/>
            <person name="Brent M.R."/>
            <person name="Chen N."/>
            <person name="Chinwalla A."/>
            <person name="Clarke L."/>
            <person name="Clee C."/>
            <person name="Coghlan A."/>
            <person name="Coulson A."/>
            <person name="D'Eustachio P."/>
            <person name="Fitch D.H.A."/>
            <person name="Fulton L.A."/>
            <person name="Fulton R.E."/>
            <person name="Griffiths-Jones S."/>
            <person name="Harris T.W."/>
            <person name="Hillier L.W."/>
            <person name="Kamath R."/>
            <person name="Kuwabara P.E."/>
            <person name="Mardis E.R."/>
            <person name="Marra M.A."/>
            <person name="Miner T.L."/>
            <person name="Minx P."/>
            <person name="Mullikin J.C."/>
            <person name="Plumb R.W."/>
            <person name="Rogers J."/>
            <person name="Schein J.E."/>
            <person name="Sohrmann M."/>
            <person name="Spieth J."/>
            <person name="Stajich J.E."/>
            <person name="Wei C."/>
            <person name="Willey D."/>
            <person name="Wilson R.K."/>
            <person name="Durbin R.M."/>
            <person name="Waterston R.H."/>
        </authorList>
    </citation>
    <scope>NUCLEOTIDE SEQUENCE [LARGE SCALE GENOMIC DNA]</scope>
    <source>
        <strain>AF16</strain>
    </source>
</reference>
<protein>
    <recommendedName>
        <fullName evidence="2">Eukaryotic translation initiation factor 3 subunit D</fullName>
        <shortName evidence="2">eIF3d</shortName>
    </recommendedName>
    <alternativeName>
        <fullName evidence="2">Eukaryotic translation initiation factor 3 subunit 7</fullName>
    </alternativeName>
</protein>
<organism>
    <name type="scientific">Caenorhabditis briggsae</name>
    <dbReference type="NCBI Taxonomy" id="6238"/>
    <lineage>
        <taxon>Eukaryota</taxon>
        <taxon>Metazoa</taxon>
        <taxon>Ecdysozoa</taxon>
        <taxon>Nematoda</taxon>
        <taxon>Chromadorea</taxon>
        <taxon>Rhabditida</taxon>
        <taxon>Rhabditina</taxon>
        <taxon>Rhabditomorpha</taxon>
        <taxon>Rhabditoidea</taxon>
        <taxon>Rhabditidae</taxon>
        <taxon>Peloderinae</taxon>
        <taxon>Caenorhabditis</taxon>
    </lineage>
</organism>
<feature type="chain" id="PRO_0000364137" description="Eukaryotic translation initiation factor 3 subunit D">
    <location>
        <begin position="1"/>
        <end position="574"/>
    </location>
</feature>
<feature type="region of interest" description="Disordered" evidence="3">
    <location>
        <begin position="153"/>
        <end position="178"/>
    </location>
</feature>
<feature type="region of interest" description="RNA gate" evidence="1">
    <location>
        <begin position="312"/>
        <end position="326"/>
    </location>
</feature>
<feature type="region of interest" description="Disordered" evidence="3">
    <location>
        <begin position="555"/>
        <end position="574"/>
    </location>
</feature>
<feature type="compositionally biased region" description="Low complexity" evidence="3">
    <location>
        <begin position="154"/>
        <end position="163"/>
    </location>
</feature>
<feature type="compositionally biased region" description="Acidic residues" evidence="3">
    <location>
        <begin position="564"/>
        <end position="574"/>
    </location>
</feature>
<name>EIF3D_CAEBR</name>
<comment type="function">
    <text evidence="2">mRNA cap-binding component of the eukaryotic translation initiation factor 3 (eIF-3) complex, which is involved in protein synthesis of a specialized repertoire of mRNAs and, together with other initiation factors, stimulates binding of mRNA and methionyl-tRNAi to the 40S ribosome. The eIF-3 complex specifically targets and initiates translation of a subset of mRNAs involved in cell proliferation. In the eIF-3 complex, eif3d specifically recognizes and binds the 7-methylguanosine cap of a subset of mRNAs.</text>
</comment>
<comment type="subunit">
    <text evidence="2">Component of the eukaryotic translation initiation factor 3 (eIF-3) complex.</text>
</comment>
<comment type="subcellular location">
    <subcellularLocation>
        <location evidence="2">Cytoplasm</location>
    </subcellularLocation>
</comment>
<comment type="domain">
    <text evidence="2">The RNA gate region regulates mRNA cap recognition to prevent promiscuous mRNA-binding before assembly of eif3d into the full eukaryotic translation initiation factor 3 (eIF-3) complex.</text>
</comment>
<comment type="similarity">
    <text evidence="2">Belongs to the eIF-3 subunit D family.</text>
</comment>
<sequence>MATTELPKFELLSLADNTSGWGPLTTSSSSVEPVPFQQFNKADRIGRVADWIGVDRFFRRGNERYNERVYGSAANAGSQFDYIHGMDEHNFQLVDTSKPMARNPQRNFRVRQMHLRKMMQKEVEKREMVNQTTNLRMKRSIAKEQQRAFKMWQRRGGNARQGQRGQGGRFGGDRPKERLPSVQVRPEWGVLEEMNLSAFSKLALPNIPGGEDIGDHQYGSLQYYDKTVDRVSVKNSVPLQRCAGVYYNVTTTEDPVIQELAQGGVGNVFGTDIILATLMTAPRSVYSWDIVAYRIGDKLFFDKRNTKDILNPVETLTVSETSAEPPSFDGNGLNNARDLATEAFYINQNFRRQVVKRNEPGFTFKNVRVPFEDEETGDATGTAYKYRKWNLGNGVDGKPVELVCRTELDGVIHGLGNETQTLTIKAFNEWDSSQAGGVDWRTKLDVQKGAVMATEIKNNSAKVAKWTLQALLAGSDTMKLGYVSRNNARSTQNHSILNTQYVKPTEFASNIALNMDNCWGILRCVIDSCMKQKPGKYLLMKDPQSPVIRLYSLPEGTFDSERESSEEENSDDDQ</sequence>
<keyword id="KW-0963">Cytoplasm</keyword>
<keyword id="KW-0396">Initiation factor</keyword>
<keyword id="KW-0648">Protein biosynthesis</keyword>
<keyword id="KW-1185">Reference proteome</keyword>
<keyword id="KW-0694">RNA-binding</keyword>
<gene>
    <name evidence="2 4" type="primary">eif-3.D</name>
    <name evidence="4" type="ORF">CBG06842</name>
</gene>
<proteinExistence type="inferred from homology"/>
<accession>A8X371</accession>
<dbReference type="EMBL" id="HE601347">
    <property type="protein sequence ID" value="CAP27081.1"/>
    <property type="molecule type" value="Genomic_DNA"/>
</dbReference>
<dbReference type="SMR" id="A8X371"/>
<dbReference type="FunCoup" id="A8X371">
    <property type="interactions" value="2942"/>
</dbReference>
<dbReference type="STRING" id="6238.A8X371"/>
<dbReference type="EnsemblMetazoa" id="CBG06842.1">
    <property type="protein sequence ID" value="CBG06842.1"/>
    <property type="gene ID" value="WBGene00029048"/>
</dbReference>
<dbReference type="KEGG" id="cbr:CBG_06842"/>
<dbReference type="CTD" id="8584432"/>
<dbReference type="WormBase" id="CBG06842">
    <property type="protein sequence ID" value="CBP07485"/>
    <property type="gene ID" value="WBGene00029048"/>
    <property type="gene designation" value="Cbr-eif-3.D"/>
</dbReference>
<dbReference type="eggNOG" id="KOG2479">
    <property type="taxonomic scope" value="Eukaryota"/>
</dbReference>
<dbReference type="HOGENOM" id="CLU_024521_2_1_1"/>
<dbReference type="InParanoid" id="A8X371"/>
<dbReference type="OMA" id="FMDKRDN"/>
<dbReference type="Proteomes" id="UP000008549">
    <property type="component" value="Unassembled WGS sequence"/>
</dbReference>
<dbReference type="GO" id="GO:0016282">
    <property type="term" value="C:eukaryotic 43S preinitiation complex"/>
    <property type="evidence" value="ECO:0007669"/>
    <property type="project" value="UniProtKB-UniRule"/>
</dbReference>
<dbReference type="GO" id="GO:0033290">
    <property type="term" value="C:eukaryotic 48S preinitiation complex"/>
    <property type="evidence" value="ECO:0007669"/>
    <property type="project" value="UniProtKB-UniRule"/>
</dbReference>
<dbReference type="GO" id="GO:0005852">
    <property type="term" value="C:eukaryotic translation initiation factor 3 complex"/>
    <property type="evidence" value="ECO:0000318"/>
    <property type="project" value="GO_Central"/>
</dbReference>
<dbReference type="GO" id="GO:0098808">
    <property type="term" value="F:mRNA cap binding"/>
    <property type="evidence" value="ECO:0007669"/>
    <property type="project" value="UniProtKB-UniRule"/>
</dbReference>
<dbReference type="GO" id="GO:0003743">
    <property type="term" value="F:translation initiation factor activity"/>
    <property type="evidence" value="ECO:0000318"/>
    <property type="project" value="GO_Central"/>
</dbReference>
<dbReference type="GO" id="GO:0002191">
    <property type="term" value="P:cap-dependent translational initiation"/>
    <property type="evidence" value="ECO:0007669"/>
    <property type="project" value="UniProtKB-UniRule"/>
</dbReference>
<dbReference type="GO" id="GO:0001732">
    <property type="term" value="P:formation of cytoplasmic translation initiation complex"/>
    <property type="evidence" value="ECO:0007669"/>
    <property type="project" value="UniProtKB-UniRule"/>
</dbReference>
<dbReference type="GO" id="GO:0006413">
    <property type="term" value="P:translational initiation"/>
    <property type="evidence" value="ECO:0000318"/>
    <property type="project" value="GO_Central"/>
</dbReference>
<dbReference type="HAMAP" id="MF_03003">
    <property type="entry name" value="eIF3d"/>
    <property type="match status" value="1"/>
</dbReference>
<dbReference type="InterPro" id="IPR007783">
    <property type="entry name" value="eIF3d"/>
</dbReference>
<dbReference type="PANTHER" id="PTHR12399">
    <property type="entry name" value="EUKARYOTIC TRANSLATION INITIATION FACTOR 3 SUBUNIT 7"/>
    <property type="match status" value="1"/>
</dbReference>
<dbReference type="PANTHER" id="PTHR12399:SF0">
    <property type="entry name" value="EUKARYOTIC TRANSLATION INITIATION FACTOR 3 SUBUNIT D"/>
    <property type="match status" value="1"/>
</dbReference>
<dbReference type="Pfam" id="PF05091">
    <property type="entry name" value="eIF-3_zeta"/>
    <property type="match status" value="1"/>
</dbReference>
<dbReference type="PIRSF" id="PIRSF016281">
    <property type="entry name" value="EIF-3_zeta"/>
    <property type="match status" value="1"/>
</dbReference>
<evidence type="ECO:0000250" key="1">
    <source>
        <dbReference type="UniProtKB" id="K7IM66"/>
    </source>
</evidence>
<evidence type="ECO:0000255" key="2">
    <source>
        <dbReference type="HAMAP-Rule" id="MF_03003"/>
    </source>
</evidence>
<evidence type="ECO:0000256" key="3">
    <source>
        <dbReference type="SAM" id="MobiDB-lite"/>
    </source>
</evidence>
<evidence type="ECO:0000312" key="4">
    <source>
        <dbReference type="WormBase" id="CBG06842"/>
    </source>
</evidence>